<feature type="chain" id="PRO_0000410942" description="Arabinose 5-phosphate isomerase KpsF">
    <location>
        <begin position="1"/>
        <end position="327"/>
    </location>
</feature>
<feature type="domain" description="SIS" evidence="4">
    <location>
        <begin position="48"/>
        <end position="191"/>
    </location>
</feature>
<feature type="domain" description="CBS 1" evidence="3">
    <location>
        <begin position="217"/>
        <end position="273"/>
    </location>
</feature>
<feature type="domain" description="CBS 2" evidence="3">
    <location>
        <begin position="282"/>
        <end position="327"/>
    </location>
</feature>
<feature type="binding site" evidence="2">
    <location>
        <begin position="63"/>
        <end position="68"/>
    </location>
    <ligand>
        <name>ATP</name>
        <dbReference type="ChEBI" id="CHEBI:30616"/>
    </ligand>
</feature>
<feature type="binding site" evidence="1">
    <location>
        <begin position="82"/>
        <end position="83"/>
    </location>
    <ligand>
        <name>substrate</name>
    </ligand>
</feature>
<feature type="binding site" evidence="1">
    <location>
        <position position="89"/>
    </location>
    <ligand>
        <name>substrate</name>
    </ligand>
</feature>
<feature type="binding site" evidence="1">
    <location>
        <position position="89"/>
    </location>
    <ligand>
        <name>Zn(2+)</name>
        <dbReference type="ChEBI" id="CHEBI:29105"/>
    </ligand>
</feature>
<feature type="binding site" evidence="1">
    <location>
        <position position="95"/>
    </location>
    <ligand>
        <name>substrate</name>
    </ligand>
</feature>
<feature type="binding site" evidence="1">
    <location>
        <begin position="121"/>
        <end position="130"/>
    </location>
    <ligand>
        <name>substrate</name>
    </ligand>
</feature>
<feature type="binding site" evidence="1">
    <location>
        <begin position="155"/>
        <end position="157"/>
    </location>
    <ligand>
        <name>substrate</name>
    </ligand>
</feature>
<feature type="site" description="Catalytically relevant" evidence="1">
    <location>
        <position position="66"/>
    </location>
</feature>
<feature type="site" description="Catalytically relevant" evidence="1">
    <location>
        <position position="118"/>
    </location>
</feature>
<feature type="site" description="Catalytically relevant" evidence="1">
    <location>
        <position position="159"/>
    </location>
</feature>
<feature type="site" description="Catalytically relevant" evidence="1">
    <location>
        <position position="200"/>
    </location>
</feature>
<name>KPSF_ECOL6</name>
<organism>
    <name type="scientific">Escherichia coli O6:H1 (strain CFT073 / ATCC 700928 / UPEC)</name>
    <dbReference type="NCBI Taxonomy" id="199310"/>
    <lineage>
        <taxon>Bacteria</taxon>
        <taxon>Pseudomonadati</taxon>
        <taxon>Pseudomonadota</taxon>
        <taxon>Gammaproteobacteria</taxon>
        <taxon>Enterobacterales</taxon>
        <taxon>Enterobacteriaceae</taxon>
        <taxon>Escherichia</taxon>
    </lineage>
</organism>
<reference key="1">
    <citation type="journal article" date="2002" name="Proc. Natl. Acad. Sci. U.S.A.">
        <title>Extensive mosaic structure revealed by the complete genome sequence of uropathogenic Escherichia coli.</title>
        <authorList>
            <person name="Welch R.A."/>
            <person name="Burland V."/>
            <person name="Plunkett G. III"/>
            <person name="Redford P."/>
            <person name="Roesch P."/>
            <person name="Rasko D."/>
            <person name="Buckles E.L."/>
            <person name="Liou S.-R."/>
            <person name="Boutin A."/>
            <person name="Hackett J."/>
            <person name="Stroud D."/>
            <person name="Mayhew G.F."/>
            <person name="Rose D.J."/>
            <person name="Zhou S."/>
            <person name="Schwartz D.C."/>
            <person name="Perna N.T."/>
            <person name="Mobley H.L.T."/>
            <person name="Donnenberg M.S."/>
            <person name="Blattner F.R."/>
        </authorList>
    </citation>
    <scope>NUCLEOTIDE SEQUENCE [LARGE SCALE GENOMIC DNA]</scope>
    <source>
        <strain>CFT073 / ATCC 700928 / UPEC</strain>
    </source>
</reference>
<reference key="2">
    <citation type="journal article" date="2006" name="Biochem. J.">
        <title>Characterization of Escherichia coli D-arabinose 5-phosphate isomerase encoded by kpsF: implications for group 2 capsule biosynthesis.</title>
        <authorList>
            <person name="Meredith T.C."/>
            <person name="Woodard R.W."/>
        </authorList>
    </citation>
    <scope>FUNCTION AS AN ARABINOSE 5-PHOSPHATE ISOMERASE</scope>
    <scope>CATALYTIC ACTIVITY</scope>
    <scope>BIOPHYSICOCHEMICAL PROPERTIES</scope>
    <scope>MASS SPECTROMETRY</scope>
    <scope>ACTIVITY REGULATION</scope>
    <scope>SUBSTRATE SPECIFICITY</scope>
    <scope>SUBUNIT</scope>
    <source>
        <strain>CFT073 / ATCC 700928 / UPEC</strain>
    </source>
</reference>
<sequence length="327" mass="35487">MSERHLPDDQSSTIDPYLITSVRQTLAEQSAALQNLSKQLDSGQYQRVLNLIMNCKGHVILSGMGKSGHVGRKISATLASTGTPSFFIHPAEAFHGDLGMITPYDLLILISASGETDEILKLVPSLKNFGNRIIAITNNGNSTLAKNADAVLELHMANETCPNNLAPTTSTTLTMAIGDALAIAMIHQRKFMPNDFARYHPGGSLGRRLLTRVADVMQHDVPAVQLDASFKTVIQRITSGCQGMVMVEDAEGGLAGIITDGDLRRFMEKEGSLTSATAAQMMTREPLTLPEDTMIIEAEEKMQKHRVSTLLVTNKANKVTGLVRIFD</sequence>
<dbReference type="EC" id="5.3.1.13" evidence="5"/>
<dbReference type="EMBL" id="AE014075">
    <property type="protein sequence ID" value="AAN82134.1"/>
    <property type="status" value="ALT_INIT"/>
    <property type="molecule type" value="Genomic_DNA"/>
</dbReference>
<dbReference type="SMR" id="Q8FDQ2"/>
<dbReference type="STRING" id="199310.c3686"/>
<dbReference type="KEGG" id="ecc:c3686"/>
<dbReference type="eggNOG" id="COG0517">
    <property type="taxonomic scope" value="Bacteria"/>
</dbReference>
<dbReference type="eggNOG" id="COG0794">
    <property type="taxonomic scope" value="Bacteria"/>
</dbReference>
<dbReference type="HOGENOM" id="CLU_040681_13_1_6"/>
<dbReference type="Proteomes" id="UP000001410">
    <property type="component" value="Chromosome"/>
</dbReference>
<dbReference type="GO" id="GO:0019146">
    <property type="term" value="F:arabinose-5-phosphate isomerase activity"/>
    <property type="evidence" value="ECO:0000314"/>
    <property type="project" value="UniProtKB"/>
</dbReference>
<dbReference type="GO" id="GO:0005524">
    <property type="term" value="F:ATP binding"/>
    <property type="evidence" value="ECO:0007669"/>
    <property type="project" value="UniProtKB-KW"/>
</dbReference>
<dbReference type="GO" id="GO:0046872">
    <property type="term" value="F:metal ion binding"/>
    <property type="evidence" value="ECO:0007669"/>
    <property type="project" value="UniProtKB-KW"/>
</dbReference>
<dbReference type="GO" id="GO:0009103">
    <property type="term" value="P:lipopolysaccharide biosynthetic process"/>
    <property type="evidence" value="ECO:0007669"/>
    <property type="project" value="UniProtKB-KW"/>
</dbReference>
<dbReference type="CDD" id="cd04604">
    <property type="entry name" value="CBS_pair_SIS_assoc"/>
    <property type="match status" value="1"/>
</dbReference>
<dbReference type="CDD" id="cd05014">
    <property type="entry name" value="SIS_Kpsf"/>
    <property type="match status" value="1"/>
</dbReference>
<dbReference type="FunFam" id="3.40.50.10490:FF:000011">
    <property type="entry name" value="Arabinose 5-phosphate isomerase"/>
    <property type="match status" value="1"/>
</dbReference>
<dbReference type="Gene3D" id="3.10.580.10">
    <property type="entry name" value="CBS-domain"/>
    <property type="match status" value="1"/>
</dbReference>
<dbReference type="Gene3D" id="3.40.50.10490">
    <property type="entry name" value="Glucose-6-phosphate isomerase like protein, domain 1"/>
    <property type="match status" value="1"/>
</dbReference>
<dbReference type="InterPro" id="IPR000644">
    <property type="entry name" value="CBS_dom"/>
</dbReference>
<dbReference type="InterPro" id="IPR046342">
    <property type="entry name" value="CBS_dom_sf"/>
</dbReference>
<dbReference type="InterPro" id="IPR050986">
    <property type="entry name" value="GutQ/KpsF_isomerases"/>
</dbReference>
<dbReference type="InterPro" id="IPR004800">
    <property type="entry name" value="KdsD/KpsF-type"/>
</dbReference>
<dbReference type="InterPro" id="IPR001347">
    <property type="entry name" value="SIS_dom"/>
</dbReference>
<dbReference type="InterPro" id="IPR046348">
    <property type="entry name" value="SIS_dom_sf"/>
</dbReference>
<dbReference type="InterPro" id="IPR035474">
    <property type="entry name" value="SIS_Kpsf"/>
</dbReference>
<dbReference type="NCBIfam" id="TIGR00393">
    <property type="entry name" value="kpsF"/>
    <property type="match status" value="1"/>
</dbReference>
<dbReference type="PANTHER" id="PTHR42745">
    <property type="match status" value="1"/>
</dbReference>
<dbReference type="PANTHER" id="PTHR42745:SF1">
    <property type="entry name" value="ARABINOSE 5-PHOSPHATE ISOMERASE KDSD"/>
    <property type="match status" value="1"/>
</dbReference>
<dbReference type="Pfam" id="PF00571">
    <property type="entry name" value="CBS"/>
    <property type="match status" value="2"/>
</dbReference>
<dbReference type="Pfam" id="PF01380">
    <property type="entry name" value="SIS"/>
    <property type="match status" value="1"/>
</dbReference>
<dbReference type="PIRSF" id="PIRSF004692">
    <property type="entry name" value="KdsD_KpsF"/>
    <property type="match status" value="1"/>
</dbReference>
<dbReference type="SUPFAM" id="SSF53697">
    <property type="entry name" value="SIS domain"/>
    <property type="match status" value="1"/>
</dbReference>
<dbReference type="PROSITE" id="PS51371">
    <property type="entry name" value="CBS"/>
    <property type="match status" value="2"/>
</dbReference>
<dbReference type="PROSITE" id="PS51464">
    <property type="entry name" value="SIS"/>
    <property type="match status" value="1"/>
</dbReference>
<proteinExistence type="evidence at protein level"/>
<evidence type="ECO:0000250" key="1"/>
<evidence type="ECO:0000255" key="2"/>
<evidence type="ECO:0000255" key="3">
    <source>
        <dbReference type="PROSITE-ProRule" id="PRU00703"/>
    </source>
</evidence>
<evidence type="ECO:0000255" key="4">
    <source>
        <dbReference type="PROSITE-ProRule" id="PRU00797"/>
    </source>
</evidence>
<evidence type="ECO:0000269" key="5">
    <source>
    </source>
</evidence>
<evidence type="ECO:0000303" key="6">
    <source>
    </source>
</evidence>
<evidence type="ECO:0000305" key="7"/>
<protein>
    <recommendedName>
        <fullName evidence="6">Arabinose 5-phosphate isomerase KpsF</fullName>
        <shortName evidence="6">API</shortName>
        <ecNumber evidence="5">5.3.1.13</ecNumber>
    </recommendedName>
    <alternativeName>
        <fullName>K-antigen-specific arabinose 5-phosphate isomerase</fullName>
        <shortName>K-API</shortName>
    </alternativeName>
</protein>
<accession>Q8FDQ2</accession>
<keyword id="KW-0067">ATP-binding</keyword>
<keyword id="KW-0129">CBS domain</keyword>
<keyword id="KW-0413">Isomerase</keyword>
<keyword id="KW-0448">Lipopolysaccharide biosynthesis</keyword>
<keyword id="KW-0479">Metal-binding</keyword>
<keyword id="KW-0547">Nucleotide-binding</keyword>
<keyword id="KW-1185">Reference proteome</keyword>
<keyword id="KW-0677">Repeat</keyword>
<keyword id="KW-0862">Zinc</keyword>
<gene>
    <name evidence="6" type="primary">kpsF</name>
    <name type="ordered locus">c3686</name>
</gene>
<comment type="function">
    <text evidence="5">Involved in the biosynthesis of K-antigen capsules. Catalyzes the reversible aldol-ketol isomerization between D-ribulose 5-phosphate (Ru5P) and D-arabinose 5-phosphate (A5P).</text>
</comment>
<comment type="catalytic activity">
    <reaction evidence="5">
        <text>D-arabinose 5-phosphate = D-ribulose 5-phosphate</text>
        <dbReference type="Rhea" id="RHEA:23104"/>
        <dbReference type="ChEBI" id="CHEBI:57693"/>
        <dbReference type="ChEBI" id="CHEBI:58121"/>
        <dbReference type="EC" id="5.3.1.13"/>
    </reaction>
    <physiologicalReaction direction="left-to-right" evidence="5">
        <dbReference type="Rhea" id="RHEA:23105"/>
    </physiologicalReaction>
    <physiologicalReaction direction="right-to-left" evidence="5">
        <dbReference type="Rhea" id="RHEA:23106"/>
    </physiologicalReaction>
</comment>
<comment type="activity regulation">
    <text evidence="5">Inhibited by 10 uM zinc, cadmium or mercury ions.</text>
</comment>
<comment type="biophysicochemical properties">
    <kinetics>
        <KM evidence="5">0.3 mM for Ru5P (at pH 7.8 and at 37 degrees Celsius)</KM>
        <KM evidence="5">0.57 mM for A5P (at pH 7.8 and at 37 degrees Celsius)</KM>
    </kinetics>
    <phDependence>
        <text evidence="5">Optimum pH is 7.8.</text>
    </phDependence>
</comment>
<comment type="subunit">
    <text evidence="5">Homotetramer.</text>
</comment>
<comment type="mass spectrometry" mass="35323.0" method="MALDI" evidence="5"/>
<comment type="similarity">
    <text evidence="7">Belongs to the SIS family. GutQ/KpsF subfamily.</text>
</comment>
<comment type="sequence caution" evidence="5">
    <conflict type="erroneous initiation">
        <sequence resource="EMBL-CDS" id="AAN82134"/>
    </conflict>
    <text>Extended N-terminus.</text>
</comment>